<keyword id="KW-0963">Cytoplasm</keyword>
<keyword id="KW-0539">Nucleus</keyword>
<keyword id="KW-1185">Reference proteome</keyword>
<keyword id="KW-0687">Ribonucleoprotein</keyword>
<keyword id="KW-0689">Ribosomal protein</keyword>
<keyword id="KW-0694">RNA-binding</keyword>
<keyword id="KW-0699">rRNA-binding</keyword>
<dbReference type="EMBL" id="CR940348">
    <property type="protein sequence ID" value="CAI74892.1"/>
    <property type="molecule type" value="Genomic_DNA"/>
</dbReference>
<dbReference type="RefSeq" id="XP_952624.1">
    <property type="nucleotide sequence ID" value="XM_947531.1"/>
</dbReference>
<dbReference type="SMR" id="Q4UDE7"/>
<dbReference type="FunCoup" id="Q4UDE7">
    <property type="interactions" value="438"/>
</dbReference>
<dbReference type="STRING" id="5874.Q4UDE7"/>
<dbReference type="GeneID" id="3862229"/>
<dbReference type="KEGG" id="tan:TA14890"/>
<dbReference type="VEuPathDB" id="PiroplasmaDB:TA14890"/>
<dbReference type="eggNOG" id="KOG0875">
    <property type="taxonomic scope" value="Eukaryota"/>
</dbReference>
<dbReference type="InParanoid" id="Q4UDE7"/>
<dbReference type="OMA" id="CQIASAH"/>
<dbReference type="OrthoDB" id="1618453at2759"/>
<dbReference type="Proteomes" id="UP000001950">
    <property type="component" value="Chromosome 2"/>
</dbReference>
<dbReference type="GO" id="GO:0022625">
    <property type="term" value="C:cytosolic large ribosomal subunit"/>
    <property type="evidence" value="ECO:0007669"/>
    <property type="project" value="TreeGrafter"/>
</dbReference>
<dbReference type="GO" id="GO:0005634">
    <property type="term" value="C:nucleus"/>
    <property type="evidence" value="ECO:0007669"/>
    <property type="project" value="UniProtKB-SubCell"/>
</dbReference>
<dbReference type="GO" id="GO:0008097">
    <property type="term" value="F:5S rRNA binding"/>
    <property type="evidence" value="ECO:0007669"/>
    <property type="project" value="InterPro"/>
</dbReference>
<dbReference type="GO" id="GO:0003735">
    <property type="term" value="F:structural constituent of ribosome"/>
    <property type="evidence" value="ECO:0007669"/>
    <property type="project" value="InterPro"/>
</dbReference>
<dbReference type="GO" id="GO:0000027">
    <property type="term" value="P:ribosomal large subunit assembly"/>
    <property type="evidence" value="ECO:0007669"/>
    <property type="project" value="TreeGrafter"/>
</dbReference>
<dbReference type="GO" id="GO:0006412">
    <property type="term" value="P:translation"/>
    <property type="evidence" value="ECO:0007669"/>
    <property type="project" value="InterPro"/>
</dbReference>
<dbReference type="CDD" id="cd00432">
    <property type="entry name" value="Ribosomal_L18_L5e"/>
    <property type="match status" value="1"/>
</dbReference>
<dbReference type="FunFam" id="3.30.420.100:FF:000002">
    <property type="entry name" value="60S ribosomal protein L5"/>
    <property type="match status" value="1"/>
</dbReference>
<dbReference type="Gene3D" id="3.30.420.100">
    <property type="match status" value="1"/>
</dbReference>
<dbReference type="HAMAP" id="MF_01337_A">
    <property type="entry name" value="Ribosomal_uL18_A"/>
    <property type="match status" value="1"/>
</dbReference>
<dbReference type="InterPro" id="IPR005485">
    <property type="entry name" value="Rbsml_uL18_euk"/>
</dbReference>
<dbReference type="InterPro" id="IPR025607">
    <property type="entry name" value="Ribosomal_uL18_C_euk"/>
</dbReference>
<dbReference type="PANTHER" id="PTHR23410:SF12">
    <property type="entry name" value="LARGE RIBOSOMAL SUBUNIT PROTEIN UL18"/>
    <property type="match status" value="1"/>
</dbReference>
<dbReference type="PANTHER" id="PTHR23410">
    <property type="entry name" value="RIBOSOMAL PROTEIN L5-RELATED"/>
    <property type="match status" value="1"/>
</dbReference>
<dbReference type="Pfam" id="PF14204">
    <property type="entry name" value="Ribosomal_L18_c"/>
    <property type="match status" value="1"/>
</dbReference>
<dbReference type="Pfam" id="PF17144">
    <property type="entry name" value="Ribosomal_L5e"/>
    <property type="match status" value="1"/>
</dbReference>
<dbReference type="PRINTS" id="PR00058">
    <property type="entry name" value="RIBOSOMALL5"/>
</dbReference>
<dbReference type="SUPFAM" id="SSF53137">
    <property type="entry name" value="Translational machinery components"/>
    <property type="match status" value="1"/>
</dbReference>
<feature type="chain" id="PRO_0000291567" description="Large ribosomal subunit protein uL18">
    <location>
        <begin position="1"/>
        <end position="306"/>
    </location>
</feature>
<organism>
    <name type="scientific">Theileria annulata</name>
    <dbReference type="NCBI Taxonomy" id="5874"/>
    <lineage>
        <taxon>Eukaryota</taxon>
        <taxon>Sar</taxon>
        <taxon>Alveolata</taxon>
        <taxon>Apicomplexa</taxon>
        <taxon>Aconoidasida</taxon>
        <taxon>Piroplasmida</taxon>
        <taxon>Theileriidae</taxon>
        <taxon>Theileria</taxon>
    </lineage>
</organism>
<evidence type="ECO:0000250" key="1">
    <source>
        <dbReference type="UniProtKB" id="P26321"/>
    </source>
</evidence>
<evidence type="ECO:0000305" key="2"/>
<sequence length="306" mass="35165">MTFLRVVKNKAYFRRFQVKFRRRREGKTDYYARRRLVAQDKNKYDSPKYRLVVRLTNKRVICQIVSSTLVGDKVHASADSSELVHYGVKVGLTNYAAAYCTGLLLARRLLTKLKLDSQFVGKVEADGELYHVEEDDNERRPFKALLDVGIKNVTTGNRVFGALKGACDGGLHVPHSEKRFPGYSVDDENNGTYDAQAHRDRIFGTHVANYMEYLKEEDPEKYKKQFSAYLKLGLDSESLEDMYASAHENIRKNPVLPTKPKRKLKHVREGSKVLTSKGSYVRNVKITKAQRRERVKQKISLLVNES</sequence>
<proteinExistence type="inferred from homology"/>
<name>RL5_THEAN</name>
<protein>
    <recommendedName>
        <fullName evidence="2">Large ribosomal subunit protein uL18</fullName>
    </recommendedName>
    <alternativeName>
        <fullName>60S ribosomal protein L5</fullName>
    </alternativeName>
</protein>
<reference key="1">
    <citation type="journal article" date="2005" name="Science">
        <title>Genome of the host-cell transforming parasite Theileria annulata compared with T. parva.</title>
        <authorList>
            <person name="Pain A."/>
            <person name="Renauld H."/>
            <person name="Berriman M."/>
            <person name="Murphy L."/>
            <person name="Yeats C.A."/>
            <person name="Weir W."/>
            <person name="Kerhornou A."/>
            <person name="Aslett M."/>
            <person name="Bishop R."/>
            <person name="Bouchier C."/>
            <person name="Cochet M."/>
            <person name="Coulson R.M.R."/>
            <person name="Cronin A."/>
            <person name="de Villiers E.P."/>
            <person name="Fraser A."/>
            <person name="Fosker N."/>
            <person name="Gardner M."/>
            <person name="Goble A."/>
            <person name="Griffiths-Jones S."/>
            <person name="Harris D.E."/>
            <person name="Katzer F."/>
            <person name="Larke N."/>
            <person name="Lord A."/>
            <person name="Maser P."/>
            <person name="McKellar S."/>
            <person name="Mooney P."/>
            <person name="Morton F."/>
            <person name="Nene V."/>
            <person name="O'Neil S."/>
            <person name="Price C."/>
            <person name="Quail M.A."/>
            <person name="Rabbinowitsch E."/>
            <person name="Rawlings N.D."/>
            <person name="Rutter S."/>
            <person name="Saunders D."/>
            <person name="Seeger K."/>
            <person name="Shah T."/>
            <person name="Squares R."/>
            <person name="Squares S."/>
            <person name="Tivey A."/>
            <person name="Walker A.R."/>
            <person name="Woodward J."/>
            <person name="Dobbelaere D.A.E."/>
            <person name="Langsley G."/>
            <person name="Rajandream M.A."/>
            <person name="McKeever D."/>
            <person name="Shiels B."/>
            <person name="Tait A."/>
            <person name="Barrell B.G."/>
            <person name="Hall N."/>
        </authorList>
    </citation>
    <scope>NUCLEOTIDE SEQUENCE [LARGE SCALE GENOMIC DNA]</scope>
    <source>
        <strain>Ankara</strain>
    </source>
</reference>
<comment type="function">
    <text evidence="1">Component of the ribosome, a large ribonucleoprotein complex responsible for the synthesis of proteins in the cell. The small ribosomal subunit (SSU) binds messenger RNAs (mRNAs) and translates the encoded message by selecting cognate aminoacyl-transfer RNA (tRNA) molecules. The large subunit (LSU) contains the ribosomal catalytic site termed the peptidyl transferase center (PTC), which catalyzes the formation of peptide bonds, thereby polymerizing the amino acids delivered by tRNAs into a polypeptide chain. The nascent polypeptides leave the ribosome through a tunnel in the LSU and interact with protein factors that function in enzymatic processing, targeting, and the membrane insertion of nascent chains at the exit of the ribosomal tunnel.</text>
</comment>
<comment type="subunit">
    <text evidence="1">Component of the large ribosomal subunit (LSU).</text>
</comment>
<comment type="subcellular location">
    <subcellularLocation>
        <location evidence="1">Cytoplasm</location>
    </subcellularLocation>
    <subcellularLocation>
        <location evidence="1">Nucleus</location>
    </subcellularLocation>
</comment>
<comment type="similarity">
    <text evidence="2">Belongs to the universal ribosomal protein uL18 family.</text>
</comment>
<gene>
    <name type="primary">RPL5</name>
    <name type="ORF">TA14890</name>
</gene>
<accession>Q4UDE7</accession>